<reference key="1">
    <citation type="submission" date="2003-03" db="EMBL/GenBank/DDBJ databases">
        <title>The complete genome sequence of Neisseria gonorrhoeae.</title>
        <authorList>
            <person name="Lewis L.A."/>
            <person name="Gillaspy A.F."/>
            <person name="McLaughlin R.E."/>
            <person name="Gipson M."/>
            <person name="Ducey T.F."/>
            <person name="Ownbey T."/>
            <person name="Hartman K."/>
            <person name="Nydick C."/>
            <person name="Carson M.B."/>
            <person name="Vaughn J."/>
            <person name="Thomson C."/>
            <person name="Song L."/>
            <person name="Lin S."/>
            <person name="Yuan X."/>
            <person name="Najar F."/>
            <person name="Zhan M."/>
            <person name="Ren Q."/>
            <person name="Zhu H."/>
            <person name="Qi S."/>
            <person name="Kenton S.M."/>
            <person name="Lai H."/>
            <person name="White J.D."/>
            <person name="Clifton S."/>
            <person name="Roe B.A."/>
            <person name="Dyer D.W."/>
        </authorList>
    </citation>
    <scope>NUCLEOTIDE SEQUENCE [LARGE SCALE GENOMIC DNA]</scope>
    <source>
        <strain>ATCC 700825 / FA 1090</strain>
    </source>
</reference>
<evidence type="ECO:0000255" key="1">
    <source>
        <dbReference type="HAMAP-Rule" id="MF_01633"/>
    </source>
</evidence>
<protein>
    <recommendedName>
        <fullName evidence="1">7-cyano-7-deazaguanine synthase</fullName>
        <ecNumber evidence="1">6.3.4.20</ecNumber>
    </recommendedName>
    <alternativeName>
        <fullName evidence="1">7-cyano-7-carbaguanine synthase</fullName>
    </alternativeName>
    <alternativeName>
        <fullName evidence="1">PreQ(0) synthase</fullName>
    </alternativeName>
    <alternativeName>
        <fullName evidence="1">Queuosine biosynthesis protein QueC</fullName>
    </alternativeName>
</protein>
<name>QUEC_NEIG1</name>
<proteinExistence type="inferred from homology"/>
<dbReference type="EC" id="6.3.4.20" evidence="1"/>
<dbReference type="EMBL" id="AE004969">
    <property type="protein sequence ID" value="AAW88888.1"/>
    <property type="molecule type" value="Genomic_DNA"/>
</dbReference>
<dbReference type="RefSeq" id="WP_010950996.1">
    <property type="nucleotide sequence ID" value="NC_002946.2"/>
</dbReference>
<dbReference type="RefSeq" id="YP_207300.1">
    <property type="nucleotide sequence ID" value="NC_002946.2"/>
</dbReference>
<dbReference type="SMR" id="Q5FA99"/>
<dbReference type="STRING" id="242231.NGO_0129"/>
<dbReference type="KEGG" id="ngo:NGO_0129"/>
<dbReference type="PATRIC" id="fig|242231.10.peg.166"/>
<dbReference type="HOGENOM" id="CLU_081854_0_0_4"/>
<dbReference type="UniPathway" id="UPA00391"/>
<dbReference type="Proteomes" id="UP000000535">
    <property type="component" value="Chromosome"/>
</dbReference>
<dbReference type="GO" id="GO:0005524">
    <property type="term" value="F:ATP binding"/>
    <property type="evidence" value="ECO:0007669"/>
    <property type="project" value="UniProtKB-UniRule"/>
</dbReference>
<dbReference type="GO" id="GO:0016879">
    <property type="term" value="F:ligase activity, forming carbon-nitrogen bonds"/>
    <property type="evidence" value="ECO:0007669"/>
    <property type="project" value="UniProtKB-UniRule"/>
</dbReference>
<dbReference type="GO" id="GO:0008270">
    <property type="term" value="F:zinc ion binding"/>
    <property type="evidence" value="ECO:0007669"/>
    <property type="project" value="UniProtKB-UniRule"/>
</dbReference>
<dbReference type="GO" id="GO:0008616">
    <property type="term" value="P:queuosine biosynthetic process"/>
    <property type="evidence" value="ECO:0007669"/>
    <property type="project" value="UniProtKB-UniRule"/>
</dbReference>
<dbReference type="CDD" id="cd01995">
    <property type="entry name" value="QueC-like"/>
    <property type="match status" value="1"/>
</dbReference>
<dbReference type="FunFam" id="3.40.50.620:FF:000017">
    <property type="entry name" value="7-cyano-7-deazaguanine synthase"/>
    <property type="match status" value="1"/>
</dbReference>
<dbReference type="Gene3D" id="3.40.50.620">
    <property type="entry name" value="HUPs"/>
    <property type="match status" value="1"/>
</dbReference>
<dbReference type="HAMAP" id="MF_01633">
    <property type="entry name" value="QueC"/>
    <property type="match status" value="1"/>
</dbReference>
<dbReference type="InterPro" id="IPR018317">
    <property type="entry name" value="QueC"/>
</dbReference>
<dbReference type="InterPro" id="IPR014729">
    <property type="entry name" value="Rossmann-like_a/b/a_fold"/>
</dbReference>
<dbReference type="NCBIfam" id="TIGR00364">
    <property type="entry name" value="7-cyano-7-deazaguanine synthase QueC"/>
    <property type="match status" value="1"/>
</dbReference>
<dbReference type="PANTHER" id="PTHR42914">
    <property type="entry name" value="7-CYANO-7-DEAZAGUANINE SYNTHASE"/>
    <property type="match status" value="1"/>
</dbReference>
<dbReference type="PANTHER" id="PTHR42914:SF1">
    <property type="entry name" value="7-CYANO-7-DEAZAGUANINE SYNTHASE"/>
    <property type="match status" value="1"/>
</dbReference>
<dbReference type="Pfam" id="PF06508">
    <property type="entry name" value="QueC"/>
    <property type="match status" value="1"/>
</dbReference>
<dbReference type="PIRSF" id="PIRSF006293">
    <property type="entry name" value="ExsB"/>
    <property type="match status" value="1"/>
</dbReference>
<dbReference type="SUPFAM" id="SSF52402">
    <property type="entry name" value="Adenine nucleotide alpha hydrolases-like"/>
    <property type="match status" value="1"/>
</dbReference>
<organism>
    <name type="scientific">Neisseria gonorrhoeae (strain ATCC 700825 / FA 1090)</name>
    <dbReference type="NCBI Taxonomy" id="242231"/>
    <lineage>
        <taxon>Bacteria</taxon>
        <taxon>Pseudomonadati</taxon>
        <taxon>Pseudomonadota</taxon>
        <taxon>Betaproteobacteria</taxon>
        <taxon>Neisseriales</taxon>
        <taxon>Neisseriaceae</taxon>
        <taxon>Neisseria</taxon>
    </lineage>
</organism>
<comment type="function">
    <text evidence="1">Catalyzes the ATP-dependent conversion of 7-carboxy-7-deazaguanine (CDG) to 7-cyano-7-deazaguanine (preQ(0)).</text>
</comment>
<comment type="catalytic activity">
    <reaction evidence="1">
        <text>7-carboxy-7-deazaguanine + NH4(+) + ATP = 7-cyano-7-deazaguanine + ADP + phosphate + H2O + H(+)</text>
        <dbReference type="Rhea" id="RHEA:27982"/>
        <dbReference type="ChEBI" id="CHEBI:15377"/>
        <dbReference type="ChEBI" id="CHEBI:15378"/>
        <dbReference type="ChEBI" id="CHEBI:28938"/>
        <dbReference type="ChEBI" id="CHEBI:30616"/>
        <dbReference type="ChEBI" id="CHEBI:43474"/>
        <dbReference type="ChEBI" id="CHEBI:45075"/>
        <dbReference type="ChEBI" id="CHEBI:61036"/>
        <dbReference type="ChEBI" id="CHEBI:456216"/>
        <dbReference type="EC" id="6.3.4.20"/>
    </reaction>
</comment>
<comment type="cofactor">
    <cofactor evidence="1">
        <name>Zn(2+)</name>
        <dbReference type="ChEBI" id="CHEBI:29105"/>
    </cofactor>
    <text evidence="1">Binds 1 zinc ion per subunit.</text>
</comment>
<comment type="pathway">
    <text evidence="1">Purine metabolism; 7-cyano-7-deazaguanine biosynthesis.</text>
</comment>
<comment type="similarity">
    <text evidence="1">Belongs to the QueC family.</text>
</comment>
<sequence length="224" mass="24798">MSNQKALVIFSGGQDSTTCLIQAIQTYGRENVQAITFRYGQRHAVELERAEWIAQDLGVSQTVLDLSLMRQITHNALMDETAAIETAAIETADNGVPNTFVDGRNALFLLYAAIFAKGQGIRHIIAGVCETDFSGYPDCRGVFVKSMNVTLNLAMDYDFQIHTPLMYLTKAQTWALADEMGVLDYIREQTHTCYKGIVGGCRECPSCILRERGLAECLESKKAV</sequence>
<accession>Q5FA99</accession>
<gene>
    <name evidence="1" type="primary">queC</name>
    <name type="ordered locus">NGO_0129</name>
</gene>
<feature type="chain" id="PRO_0000246863" description="7-cyano-7-deazaguanine synthase">
    <location>
        <begin position="1"/>
        <end position="224"/>
    </location>
</feature>
<feature type="binding site" evidence="1">
    <location>
        <begin position="10"/>
        <end position="20"/>
    </location>
    <ligand>
        <name>ATP</name>
        <dbReference type="ChEBI" id="CHEBI:30616"/>
    </ligand>
</feature>
<feature type="binding site" evidence="1">
    <location>
        <position position="193"/>
    </location>
    <ligand>
        <name>Zn(2+)</name>
        <dbReference type="ChEBI" id="CHEBI:29105"/>
    </ligand>
</feature>
<feature type="binding site" evidence="1">
    <location>
        <position position="201"/>
    </location>
    <ligand>
        <name>Zn(2+)</name>
        <dbReference type="ChEBI" id="CHEBI:29105"/>
    </ligand>
</feature>
<feature type="binding site" evidence="1">
    <location>
        <position position="204"/>
    </location>
    <ligand>
        <name>Zn(2+)</name>
        <dbReference type="ChEBI" id="CHEBI:29105"/>
    </ligand>
</feature>
<feature type="binding site" evidence="1">
    <location>
        <position position="207"/>
    </location>
    <ligand>
        <name>Zn(2+)</name>
        <dbReference type="ChEBI" id="CHEBI:29105"/>
    </ligand>
</feature>
<keyword id="KW-0067">ATP-binding</keyword>
<keyword id="KW-0436">Ligase</keyword>
<keyword id="KW-0479">Metal-binding</keyword>
<keyword id="KW-0547">Nucleotide-binding</keyword>
<keyword id="KW-0671">Queuosine biosynthesis</keyword>
<keyword id="KW-1185">Reference proteome</keyword>
<keyword id="KW-0862">Zinc</keyword>